<feature type="chain" id="PRO_0000137173" description="Translation initiation factor IF-2">
    <location>
        <begin position="1"/>
        <end position="997"/>
    </location>
</feature>
<feature type="domain" description="tr-type G">
    <location>
        <begin position="498"/>
        <end position="665"/>
    </location>
</feature>
<feature type="region of interest" description="Disordered" evidence="3">
    <location>
        <begin position="101"/>
        <end position="409"/>
    </location>
</feature>
<feature type="region of interest" description="G1" evidence="1">
    <location>
        <begin position="507"/>
        <end position="514"/>
    </location>
</feature>
<feature type="region of interest" description="G2" evidence="1">
    <location>
        <begin position="532"/>
        <end position="536"/>
    </location>
</feature>
<feature type="region of interest" description="G3" evidence="1">
    <location>
        <begin position="553"/>
        <end position="556"/>
    </location>
</feature>
<feature type="region of interest" description="G4" evidence="1">
    <location>
        <begin position="607"/>
        <end position="610"/>
    </location>
</feature>
<feature type="region of interest" description="G5" evidence="1">
    <location>
        <begin position="643"/>
        <end position="645"/>
    </location>
</feature>
<feature type="compositionally biased region" description="Low complexity" evidence="3">
    <location>
        <begin position="116"/>
        <end position="185"/>
    </location>
</feature>
<feature type="compositionally biased region" description="Low complexity" evidence="3">
    <location>
        <begin position="195"/>
        <end position="208"/>
    </location>
</feature>
<feature type="compositionally biased region" description="Low complexity" evidence="3">
    <location>
        <begin position="244"/>
        <end position="280"/>
    </location>
</feature>
<feature type="compositionally biased region" description="Basic and acidic residues" evidence="3">
    <location>
        <begin position="281"/>
        <end position="292"/>
    </location>
</feature>
<feature type="compositionally biased region" description="Gly residues" evidence="3">
    <location>
        <begin position="385"/>
        <end position="394"/>
    </location>
</feature>
<feature type="compositionally biased region" description="Basic and acidic residues" evidence="3">
    <location>
        <begin position="400"/>
        <end position="409"/>
    </location>
</feature>
<feature type="binding site" evidence="2">
    <location>
        <begin position="507"/>
        <end position="514"/>
    </location>
    <ligand>
        <name>GTP</name>
        <dbReference type="ChEBI" id="CHEBI:37565"/>
    </ligand>
</feature>
<feature type="binding site" evidence="2">
    <location>
        <begin position="553"/>
        <end position="557"/>
    </location>
    <ligand>
        <name>GTP</name>
        <dbReference type="ChEBI" id="CHEBI:37565"/>
    </ligand>
</feature>
<feature type="binding site" evidence="2">
    <location>
        <begin position="607"/>
        <end position="610"/>
    </location>
    <ligand>
        <name>GTP</name>
        <dbReference type="ChEBI" id="CHEBI:37565"/>
    </ligand>
</feature>
<sequence>MSSNTVAQFATELKMPANVLLEQLRAAGVDLKSVDDAVTDSDKAKLLESLRRAHGATEGKKITLTRRQTSEIRQADATGRSRTIQVEVRKKRVFVKRDPAELAAEQAAARAEEAAAEAVPAEAAPAPAEPVRAEPAVETAAKPVEPPVAEAPAEPVAAPAAEPQSEQPAQAEAQPEPTPAAQAEPEPQPEPQPEAAPAQAVAEPVEPAKNVSVTETEAEQARPEPVVHAQTELTSKTPAPVAQPSAPAESPKSAKAEPAAAPKTTAKPGEIRRAAAPAAPDRAREEARRAAEAEAAALREMLSRPRKVLRAPEPEPQAGALSGTLHKPAGKPATTAAPKKDAKPGAPGAKKTIKTAEVSSTWSDDSARKKPADNKPAVTTRDGWRAGGKGGRGGRNSRNQHQDRRHEQVQQEFIAREIHVPETISVADLAHKMSVKAAEVIKQLMKLGQMVTINQVLDQETAMIVVQEFGHMAIAAKLDDPEAFLDETAAVTEAEAEPRAPVVTVMGHVDHGKTSLLDYIRRAKVASGEAGGITQHIGAYHVETGRGVVTFLDTPGHEAFTAMRARGAKATDIVILVVAADDGVMPQTREAIHHAKAGGVPLVVAVNKIDKPEANPERVKQELVAEEVVPEEYGGDVPFVPVSAKTGAGIDDLLENVLLQAEILELKAPIEAPAKGLVIEARLDKGRGPVATILVQSGTLKRGDVVLAGASFGRVRAMLDENGKQIQTAGPSIPVEIQGLTEVPAAGDELMVLSDERKAREIALFRQGKFRDVKLARQQAAKLESMFDNLGEGTQTLALIVKTDVQGSQEALVSSLTKLSTDEVRVQVVHAAVGGISESDVNLAIASNAVVIGFNVRAEQSAKKLAETNGIDLRYYNIIYDAVDEVKAAMSGMLAPEKREEVIGLVEVREVYTISRIGTVAGCMVLDGVVRRDSQVRLLRNNVVQWTGHLDSLRRFKDDVKEVKSGFDCGLTLRGNNDLQLGDQLEVFEIKEIARTL</sequence>
<organism>
    <name type="scientific">Bordetella bronchiseptica (strain ATCC BAA-588 / NCTC 13252 / RB50)</name>
    <name type="common">Alcaligenes bronchisepticus</name>
    <dbReference type="NCBI Taxonomy" id="257310"/>
    <lineage>
        <taxon>Bacteria</taxon>
        <taxon>Pseudomonadati</taxon>
        <taxon>Pseudomonadota</taxon>
        <taxon>Betaproteobacteria</taxon>
        <taxon>Burkholderiales</taxon>
        <taxon>Alcaligenaceae</taxon>
        <taxon>Bordetella</taxon>
    </lineage>
</organism>
<dbReference type="EMBL" id="BX640446">
    <property type="protein sequence ID" value="CAE33738.1"/>
    <property type="molecule type" value="Genomic_DNA"/>
</dbReference>
<dbReference type="RefSeq" id="WP_003810548.1">
    <property type="nucleotide sequence ID" value="NC_002927.3"/>
</dbReference>
<dbReference type="SMR" id="Q7WHG2"/>
<dbReference type="GeneID" id="56479356"/>
<dbReference type="KEGG" id="bbr:BB3246"/>
<dbReference type="eggNOG" id="COG0532">
    <property type="taxonomic scope" value="Bacteria"/>
</dbReference>
<dbReference type="HOGENOM" id="CLU_006301_6_0_4"/>
<dbReference type="Proteomes" id="UP000001027">
    <property type="component" value="Chromosome"/>
</dbReference>
<dbReference type="GO" id="GO:0005829">
    <property type="term" value="C:cytosol"/>
    <property type="evidence" value="ECO:0007669"/>
    <property type="project" value="TreeGrafter"/>
</dbReference>
<dbReference type="GO" id="GO:0005525">
    <property type="term" value="F:GTP binding"/>
    <property type="evidence" value="ECO:0007669"/>
    <property type="project" value="UniProtKB-KW"/>
</dbReference>
<dbReference type="GO" id="GO:0003924">
    <property type="term" value="F:GTPase activity"/>
    <property type="evidence" value="ECO:0007669"/>
    <property type="project" value="UniProtKB-UniRule"/>
</dbReference>
<dbReference type="GO" id="GO:0097216">
    <property type="term" value="F:guanosine tetraphosphate binding"/>
    <property type="evidence" value="ECO:0007669"/>
    <property type="project" value="UniProtKB-ARBA"/>
</dbReference>
<dbReference type="GO" id="GO:0003743">
    <property type="term" value="F:translation initiation factor activity"/>
    <property type="evidence" value="ECO:0007669"/>
    <property type="project" value="UniProtKB-UniRule"/>
</dbReference>
<dbReference type="CDD" id="cd01887">
    <property type="entry name" value="IF2_eIF5B"/>
    <property type="match status" value="1"/>
</dbReference>
<dbReference type="CDD" id="cd03702">
    <property type="entry name" value="IF2_mtIF2_II"/>
    <property type="match status" value="1"/>
</dbReference>
<dbReference type="CDD" id="cd03692">
    <property type="entry name" value="mtIF2_IVc"/>
    <property type="match status" value="1"/>
</dbReference>
<dbReference type="FunFam" id="2.40.30.10:FF:000007">
    <property type="entry name" value="Translation initiation factor IF-2"/>
    <property type="match status" value="1"/>
</dbReference>
<dbReference type="FunFam" id="2.40.30.10:FF:000008">
    <property type="entry name" value="Translation initiation factor IF-2"/>
    <property type="match status" value="1"/>
</dbReference>
<dbReference type="FunFam" id="3.40.50.10050:FF:000001">
    <property type="entry name" value="Translation initiation factor IF-2"/>
    <property type="match status" value="1"/>
</dbReference>
<dbReference type="FunFam" id="3.40.50.300:FF:000019">
    <property type="entry name" value="Translation initiation factor IF-2"/>
    <property type="match status" value="1"/>
</dbReference>
<dbReference type="Gene3D" id="3.40.50.300">
    <property type="entry name" value="P-loop containing nucleotide triphosphate hydrolases"/>
    <property type="match status" value="1"/>
</dbReference>
<dbReference type="Gene3D" id="3.30.56.50">
    <property type="entry name" value="Putative DNA-binding domain, N-terminal subdomain of bacterial translation initiation factor IF2"/>
    <property type="match status" value="1"/>
</dbReference>
<dbReference type="Gene3D" id="2.40.30.10">
    <property type="entry name" value="Translation factors"/>
    <property type="match status" value="2"/>
</dbReference>
<dbReference type="Gene3D" id="3.40.50.10050">
    <property type="entry name" value="Translation initiation factor IF- 2, domain 3"/>
    <property type="match status" value="1"/>
</dbReference>
<dbReference type="HAMAP" id="MF_00100_B">
    <property type="entry name" value="IF_2_B"/>
    <property type="match status" value="1"/>
</dbReference>
<dbReference type="InterPro" id="IPR009061">
    <property type="entry name" value="DNA-bd_dom_put_sf"/>
</dbReference>
<dbReference type="InterPro" id="IPR053905">
    <property type="entry name" value="EF-G-like_DII"/>
</dbReference>
<dbReference type="InterPro" id="IPR004161">
    <property type="entry name" value="EFTu-like_2"/>
</dbReference>
<dbReference type="InterPro" id="IPR013575">
    <property type="entry name" value="IF2_assoc_dom_bac"/>
</dbReference>
<dbReference type="InterPro" id="IPR044145">
    <property type="entry name" value="IF2_II"/>
</dbReference>
<dbReference type="InterPro" id="IPR006847">
    <property type="entry name" value="IF2_N"/>
</dbReference>
<dbReference type="InterPro" id="IPR027417">
    <property type="entry name" value="P-loop_NTPase"/>
</dbReference>
<dbReference type="InterPro" id="IPR005225">
    <property type="entry name" value="Small_GTP-bd"/>
</dbReference>
<dbReference type="InterPro" id="IPR000795">
    <property type="entry name" value="T_Tr_GTP-bd_dom"/>
</dbReference>
<dbReference type="InterPro" id="IPR000178">
    <property type="entry name" value="TF_IF2_bacterial-like"/>
</dbReference>
<dbReference type="InterPro" id="IPR015760">
    <property type="entry name" value="TIF_IF2"/>
</dbReference>
<dbReference type="InterPro" id="IPR023115">
    <property type="entry name" value="TIF_IF2_dom3"/>
</dbReference>
<dbReference type="InterPro" id="IPR036925">
    <property type="entry name" value="TIF_IF2_dom3_sf"/>
</dbReference>
<dbReference type="InterPro" id="IPR009000">
    <property type="entry name" value="Transl_B-barrel_sf"/>
</dbReference>
<dbReference type="NCBIfam" id="TIGR00487">
    <property type="entry name" value="IF-2"/>
    <property type="match status" value="1"/>
</dbReference>
<dbReference type="NCBIfam" id="TIGR00231">
    <property type="entry name" value="small_GTP"/>
    <property type="match status" value="1"/>
</dbReference>
<dbReference type="PANTHER" id="PTHR43381:SF5">
    <property type="entry name" value="TR-TYPE G DOMAIN-CONTAINING PROTEIN"/>
    <property type="match status" value="1"/>
</dbReference>
<dbReference type="PANTHER" id="PTHR43381">
    <property type="entry name" value="TRANSLATION INITIATION FACTOR IF-2-RELATED"/>
    <property type="match status" value="1"/>
</dbReference>
<dbReference type="Pfam" id="PF22042">
    <property type="entry name" value="EF-G_D2"/>
    <property type="match status" value="1"/>
</dbReference>
<dbReference type="Pfam" id="PF00009">
    <property type="entry name" value="GTP_EFTU"/>
    <property type="match status" value="1"/>
</dbReference>
<dbReference type="Pfam" id="PF03144">
    <property type="entry name" value="GTP_EFTU_D2"/>
    <property type="match status" value="1"/>
</dbReference>
<dbReference type="Pfam" id="PF11987">
    <property type="entry name" value="IF-2"/>
    <property type="match status" value="1"/>
</dbReference>
<dbReference type="Pfam" id="PF08364">
    <property type="entry name" value="IF2_assoc"/>
    <property type="match status" value="1"/>
</dbReference>
<dbReference type="Pfam" id="PF04760">
    <property type="entry name" value="IF2_N"/>
    <property type="match status" value="2"/>
</dbReference>
<dbReference type="SUPFAM" id="SSF52156">
    <property type="entry name" value="Initiation factor IF2/eIF5b, domain 3"/>
    <property type="match status" value="1"/>
</dbReference>
<dbReference type="SUPFAM" id="SSF52540">
    <property type="entry name" value="P-loop containing nucleoside triphosphate hydrolases"/>
    <property type="match status" value="1"/>
</dbReference>
<dbReference type="SUPFAM" id="SSF46955">
    <property type="entry name" value="Putative DNA-binding domain"/>
    <property type="match status" value="1"/>
</dbReference>
<dbReference type="SUPFAM" id="SSF50447">
    <property type="entry name" value="Translation proteins"/>
    <property type="match status" value="2"/>
</dbReference>
<dbReference type="PROSITE" id="PS51722">
    <property type="entry name" value="G_TR_2"/>
    <property type="match status" value="1"/>
</dbReference>
<dbReference type="PROSITE" id="PS01176">
    <property type="entry name" value="IF2"/>
    <property type="match status" value="1"/>
</dbReference>
<comment type="function">
    <text evidence="2">One of the essential components for the initiation of protein synthesis. Protects formylmethionyl-tRNA from spontaneous hydrolysis and promotes its binding to the 30S ribosomal subunits. Also involved in the hydrolysis of GTP during the formation of the 70S ribosomal complex.</text>
</comment>
<comment type="subcellular location">
    <subcellularLocation>
        <location evidence="2">Cytoplasm</location>
    </subcellularLocation>
</comment>
<comment type="similarity">
    <text evidence="2">Belongs to the TRAFAC class translation factor GTPase superfamily. Classic translation factor GTPase family. IF-2 subfamily.</text>
</comment>
<evidence type="ECO:0000250" key="1"/>
<evidence type="ECO:0000255" key="2">
    <source>
        <dbReference type="HAMAP-Rule" id="MF_00100"/>
    </source>
</evidence>
<evidence type="ECO:0000256" key="3">
    <source>
        <dbReference type="SAM" id="MobiDB-lite"/>
    </source>
</evidence>
<protein>
    <recommendedName>
        <fullName evidence="2">Translation initiation factor IF-2</fullName>
    </recommendedName>
</protein>
<keyword id="KW-0963">Cytoplasm</keyword>
<keyword id="KW-0342">GTP-binding</keyword>
<keyword id="KW-0396">Initiation factor</keyword>
<keyword id="KW-0547">Nucleotide-binding</keyword>
<keyword id="KW-0648">Protein biosynthesis</keyword>
<name>IF2_BORBR</name>
<accession>Q7WHG2</accession>
<gene>
    <name evidence="2" type="primary">infB</name>
    <name type="ordered locus">BB3246</name>
</gene>
<proteinExistence type="inferred from homology"/>
<reference key="1">
    <citation type="journal article" date="2003" name="Nat. Genet.">
        <title>Comparative analysis of the genome sequences of Bordetella pertussis, Bordetella parapertussis and Bordetella bronchiseptica.</title>
        <authorList>
            <person name="Parkhill J."/>
            <person name="Sebaihia M."/>
            <person name="Preston A."/>
            <person name="Murphy L.D."/>
            <person name="Thomson N.R."/>
            <person name="Harris D.E."/>
            <person name="Holden M.T.G."/>
            <person name="Churcher C.M."/>
            <person name="Bentley S.D."/>
            <person name="Mungall K.L."/>
            <person name="Cerdeno-Tarraga A.-M."/>
            <person name="Temple L."/>
            <person name="James K.D."/>
            <person name="Harris B."/>
            <person name="Quail M.A."/>
            <person name="Achtman M."/>
            <person name="Atkin R."/>
            <person name="Baker S."/>
            <person name="Basham D."/>
            <person name="Bason N."/>
            <person name="Cherevach I."/>
            <person name="Chillingworth T."/>
            <person name="Collins M."/>
            <person name="Cronin A."/>
            <person name="Davis P."/>
            <person name="Doggett J."/>
            <person name="Feltwell T."/>
            <person name="Goble A."/>
            <person name="Hamlin N."/>
            <person name="Hauser H."/>
            <person name="Holroyd S."/>
            <person name="Jagels K."/>
            <person name="Leather S."/>
            <person name="Moule S."/>
            <person name="Norberczak H."/>
            <person name="O'Neil S."/>
            <person name="Ormond D."/>
            <person name="Price C."/>
            <person name="Rabbinowitsch E."/>
            <person name="Rutter S."/>
            <person name="Sanders M."/>
            <person name="Saunders D."/>
            <person name="Seeger K."/>
            <person name="Sharp S."/>
            <person name="Simmonds M."/>
            <person name="Skelton J."/>
            <person name="Squares R."/>
            <person name="Squares S."/>
            <person name="Stevens K."/>
            <person name="Unwin L."/>
            <person name="Whitehead S."/>
            <person name="Barrell B.G."/>
            <person name="Maskell D.J."/>
        </authorList>
    </citation>
    <scope>NUCLEOTIDE SEQUENCE [LARGE SCALE GENOMIC DNA]</scope>
    <source>
        <strain>ATCC BAA-588 / NCTC 13252 / RB50</strain>
    </source>
</reference>